<dbReference type="EC" id="4.3.3.6" evidence="1"/>
<dbReference type="EMBL" id="BA000011">
    <property type="protein sequence ID" value="BAB60169.1"/>
    <property type="molecule type" value="Genomic_DNA"/>
</dbReference>
<dbReference type="RefSeq" id="WP_010917256.1">
    <property type="nucleotide sequence ID" value="NC_002689.2"/>
</dbReference>
<dbReference type="SMR" id="Q979Y3"/>
<dbReference type="STRING" id="273116.gene:9381820"/>
<dbReference type="PaxDb" id="273116-14325265"/>
<dbReference type="GeneID" id="1441138"/>
<dbReference type="KEGG" id="tvo:TVG1050816"/>
<dbReference type="eggNOG" id="arCOG04075">
    <property type="taxonomic scope" value="Archaea"/>
</dbReference>
<dbReference type="HOGENOM" id="CLU_055352_1_0_2"/>
<dbReference type="OrthoDB" id="6840at2157"/>
<dbReference type="PhylomeDB" id="Q979Y3"/>
<dbReference type="UniPathway" id="UPA00245"/>
<dbReference type="Proteomes" id="UP000001017">
    <property type="component" value="Chromosome"/>
</dbReference>
<dbReference type="GO" id="GO:0036381">
    <property type="term" value="F:pyridoxal 5'-phosphate synthase (glutamine hydrolysing) activity"/>
    <property type="evidence" value="ECO:0007669"/>
    <property type="project" value="UniProtKB-UniRule"/>
</dbReference>
<dbReference type="GO" id="GO:0006520">
    <property type="term" value="P:amino acid metabolic process"/>
    <property type="evidence" value="ECO:0007669"/>
    <property type="project" value="TreeGrafter"/>
</dbReference>
<dbReference type="GO" id="GO:0042823">
    <property type="term" value="P:pyridoxal phosphate biosynthetic process"/>
    <property type="evidence" value="ECO:0007669"/>
    <property type="project" value="UniProtKB-UniRule"/>
</dbReference>
<dbReference type="GO" id="GO:0008615">
    <property type="term" value="P:pyridoxine biosynthetic process"/>
    <property type="evidence" value="ECO:0007669"/>
    <property type="project" value="TreeGrafter"/>
</dbReference>
<dbReference type="CDD" id="cd04727">
    <property type="entry name" value="pdxS"/>
    <property type="match status" value="1"/>
</dbReference>
<dbReference type="Gene3D" id="3.20.20.70">
    <property type="entry name" value="Aldolase class I"/>
    <property type="match status" value="1"/>
</dbReference>
<dbReference type="HAMAP" id="MF_01824">
    <property type="entry name" value="PdxS"/>
    <property type="match status" value="1"/>
</dbReference>
<dbReference type="InterPro" id="IPR013785">
    <property type="entry name" value="Aldolase_TIM"/>
</dbReference>
<dbReference type="InterPro" id="IPR001852">
    <property type="entry name" value="PdxS/SNZ"/>
</dbReference>
<dbReference type="InterPro" id="IPR033755">
    <property type="entry name" value="PdxS/SNZ_N"/>
</dbReference>
<dbReference type="InterPro" id="IPR011060">
    <property type="entry name" value="RibuloseP-bd_barrel"/>
</dbReference>
<dbReference type="InterPro" id="IPR033983">
    <property type="entry name" value="Thiazole_synthase_ThiG"/>
</dbReference>
<dbReference type="NCBIfam" id="NF003215">
    <property type="entry name" value="PRK04180.1"/>
    <property type="match status" value="1"/>
</dbReference>
<dbReference type="NCBIfam" id="TIGR00343">
    <property type="entry name" value="pyridoxal 5'-phosphate synthase lyase subunit PdxS"/>
    <property type="match status" value="1"/>
</dbReference>
<dbReference type="PANTHER" id="PTHR31829">
    <property type="entry name" value="PYRIDOXAL 5'-PHOSPHATE SYNTHASE SUBUNIT SNZ1-RELATED"/>
    <property type="match status" value="1"/>
</dbReference>
<dbReference type="PANTHER" id="PTHR31829:SF0">
    <property type="entry name" value="PYRIDOXAL 5'-PHOSPHATE SYNTHASE SUBUNIT SNZ1-RELATED"/>
    <property type="match status" value="1"/>
</dbReference>
<dbReference type="Pfam" id="PF01680">
    <property type="entry name" value="SOR_SNZ"/>
    <property type="match status" value="1"/>
</dbReference>
<dbReference type="Pfam" id="PF05690">
    <property type="entry name" value="ThiG"/>
    <property type="match status" value="1"/>
</dbReference>
<dbReference type="PIRSF" id="PIRSF029271">
    <property type="entry name" value="Pdx1"/>
    <property type="match status" value="1"/>
</dbReference>
<dbReference type="SUPFAM" id="SSF51366">
    <property type="entry name" value="Ribulose-phoshate binding barrel"/>
    <property type="match status" value="1"/>
</dbReference>
<dbReference type="PROSITE" id="PS01235">
    <property type="entry name" value="PDXS_SNZ_1"/>
    <property type="match status" value="1"/>
</dbReference>
<dbReference type="PROSITE" id="PS51129">
    <property type="entry name" value="PDXS_SNZ_2"/>
    <property type="match status" value="1"/>
</dbReference>
<comment type="function">
    <text evidence="1">Catalyzes the formation of pyridoxal 5'-phosphate from ribose 5-phosphate (RBP), glyceraldehyde 3-phosphate (G3P) and ammonia. The ammonia is provided by the PdxT subunit. Can also use ribulose 5-phosphate and dihydroxyacetone phosphate as substrates, resulting from enzyme-catalyzed isomerization of RBP and G3P, respectively.</text>
</comment>
<comment type="catalytic activity">
    <reaction evidence="1">
        <text>aldehydo-D-ribose 5-phosphate + D-glyceraldehyde 3-phosphate + L-glutamine = pyridoxal 5'-phosphate + L-glutamate + phosphate + 3 H2O + H(+)</text>
        <dbReference type="Rhea" id="RHEA:31507"/>
        <dbReference type="ChEBI" id="CHEBI:15377"/>
        <dbReference type="ChEBI" id="CHEBI:15378"/>
        <dbReference type="ChEBI" id="CHEBI:29985"/>
        <dbReference type="ChEBI" id="CHEBI:43474"/>
        <dbReference type="ChEBI" id="CHEBI:58273"/>
        <dbReference type="ChEBI" id="CHEBI:58359"/>
        <dbReference type="ChEBI" id="CHEBI:59776"/>
        <dbReference type="ChEBI" id="CHEBI:597326"/>
        <dbReference type="EC" id="4.3.3.6"/>
    </reaction>
</comment>
<comment type="pathway">
    <text evidence="1">Cofactor biosynthesis; pyridoxal 5'-phosphate biosynthesis.</text>
</comment>
<comment type="subunit">
    <text evidence="1">In the presence of PdxT, forms a dodecamer of heterodimers.</text>
</comment>
<comment type="similarity">
    <text evidence="1">Belongs to the PdxS/SNZ family.</text>
</comment>
<organism>
    <name type="scientific">Thermoplasma volcanium (strain ATCC 51530 / DSM 4299 / JCM 9571 / NBRC 15438 / GSS1)</name>
    <dbReference type="NCBI Taxonomy" id="273116"/>
    <lineage>
        <taxon>Archaea</taxon>
        <taxon>Methanobacteriati</taxon>
        <taxon>Thermoplasmatota</taxon>
        <taxon>Thermoplasmata</taxon>
        <taxon>Thermoplasmatales</taxon>
        <taxon>Thermoplasmataceae</taxon>
        <taxon>Thermoplasma</taxon>
    </lineage>
</organism>
<evidence type="ECO:0000255" key="1">
    <source>
        <dbReference type="HAMAP-Rule" id="MF_01824"/>
    </source>
</evidence>
<name>PDXS_THEVO</name>
<accession>Q979Y3</accession>
<reference key="1">
    <citation type="journal article" date="2000" name="Proc. Natl. Acad. Sci. U.S.A.">
        <title>Archaeal adaptation to higher temperatures revealed by genomic sequence of Thermoplasma volcanium.</title>
        <authorList>
            <person name="Kawashima T."/>
            <person name="Amano N."/>
            <person name="Koike H."/>
            <person name="Makino S."/>
            <person name="Higuchi S."/>
            <person name="Kawashima-Ohya Y."/>
            <person name="Watanabe K."/>
            <person name="Yamazaki M."/>
            <person name="Kanehori K."/>
            <person name="Kawamoto T."/>
            <person name="Nunoshiba T."/>
            <person name="Yamamoto Y."/>
            <person name="Aramaki H."/>
            <person name="Makino K."/>
            <person name="Suzuki M."/>
        </authorList>
    </citation>
    <scope>NUCLEOTIDE SEQUENCE [LARGE SCALE GENOMIC DNA]</scope>
    <source>
        <strain>ATCC 51530 / DSM 4299 / JCM 9571 / NBRC 15438 / GSS1</strain>
    </source>
</reference>
<keyword id="KW-0456">Lyase</keyword>
<keyword id="KW-0663">Pyridoxal phosphate</keyword>
<keyword id="KW-0704">Schiff base</keyword>
<gene>
    <name evidence="1" type="primary">pdxS</name>
    <name type="ordered locus">TV1027</name>
    <name type="ORF">TVG1050816</name>
</gene>
<protein>
    <recommendedName>
        <fullName evidence="1">Pyridoxal 5'-phosphate synthase subunit PdxS</fullName>
        <shortName evidence="1">PLP synthase subunit PdxS</shortName>
        <ecNumber evidence="1">4.3.3.6</ecNumber>
    </recommendedName>
    <alternativeName>
        <fullName evidence="1">Pdx1</fullName>
    </alternativeName>
</protein>
<proteinExistence type="inferred from homology"/>
<sequence>MALDLEKLKFGTELIKRGFSSMTKGGVIMDVTTAEQAKIAEKAGAVAVMALERVPADIRAAGGVARMADPKKIREILDAVTIPVMAKVRIGHISEAYTLEKLGVDMLDESEVLTPADPFFHLYKKKLTVPVVSGARNLPEAVRRIFEGAAMVRTKGEAGTGNIIEAVRHIRKVNEEIAIVRRMTQDEIKTAAENIASSYFQLRNEASTDLFGQSGKVLYDDVYYGMSREKIVKGISDILRQIRKLNRLPVVNFAAGGVATPADGALMMELGADGVFVGSGIFKSPDPEKMAKSIVEAVENYKDYDVVARVSEGLQGMPGIDIESIPRDSRLQERGW</sequence>
<feature type="chain" id="PRO_0000109451" description="Pyridoxal 5'-phosphate synthase subunit PdxS">
    <location>
        <begin position="1"/>
        <end position="336"/>
    </location>
</feature>
<feature type="active site" description="Schiff-base intermediate with D-ribose 5-phosphate" evidence="1">
    <location>
        <position position="87"/>
    </location>
</feature>
<feature type="binding site" evidence="1">
    <location>
        <position position="30"/>
    </location>
    <ligand>
        <name>D-ribose 5-phosphate</name>
        <dbReference type="ChEBI" id="CHEBI:78346"/>
    </ligand>
</feature>
<feature type="binding site" evidence="1">
    <location>
        <position position="159"/>
    </location>
    <ligand>
        <name>D-ribose 5-phosphate</name>
        <dbReference type="ChEBI" id="CHEBI:78346"/>
    </ligand>
</feature>
<feature type="binding site" evidence="1">
    <location>
        <position position="171"/>
    </location>
    <ligand>
        <name>D-glyceraldehyde 3-phosphate</name>
        <dbReference type="ChEBI" id="CHEBI:59776"/>
    </ligand>
</feature>
<feature type="binding site" evidence="1">
    <location>
        <position position="257"/>
    </location>
    <ligand>
        <name>D-ribose 5-phosphate</name>
        <dbReference type="ChEBI" id="CHEBI:78346"/>
    </ligand>
</feature>
<feature type="binding site" evidence="1">
    <location>
        <begin position="278"/>
        <end position="279"/>
    </location>
    <ligand>
        <name>D-ribose 5-phosphate</name>
        <dbReference type="ChEBI" id="CHEBI:78346"/>
    </ligand>
</feature>